<sequence>MSAYPKFDVILKALNLSSVGVIITDPEQKNNPIIFVNTGFENITGYTKEEAIGSNCHFLQGDDTDKEEVAKIRHAINEKSTANVLLKNYRKNGTSFMNELTIEPIYDDNDHLYFVGIQKDVTTEHNYQLELEKSLWEIEKLSTPIVPIKENICVLPLIGSLTHDRFQHMSDYVSEYMDNGKEDYLIMDLSGLADFNEDAVMNLVKFHGFMKLTGVELIITGISPKFAMTLMRYQENLSSLTTYSTIKEALQFY</sequence>
<reference key="1">
    <citation type="journal article" date="2001" name="Science">
        <title>Comparative genomics of Listeria species.</title>
        <authorList>
            <person name="Glaser P."/>
            <person name="Frangeul L."/>
            <person name="Buchrieser C."/>
            <person name="Rusniok C."/>
            <person name="Amend A."/>
            <person name="Baquero F."/>
            <person name="Berche P."/>
            <person name="Bloecker H."/>
            <person name="Brandt P."/>
            <person name="Chakraborty T."/>
            <person name="Charbit A."/>
            <person name="Chetouani F."/>
            <person name="Couve E."/>
            <person name="de Daruvar A."/>
            <person name="Dehoux P."/>
            <person name="Domann E."/>
            <person name="Dominguez-Bernal G."/>
            <person name="Duchaud E."/>
            <person name="Durant L."/>
            <person name="Dussurget O."/>
            <person name="Entian K.-D."/>
            <person name="Fsihi H."/>
            <person name="Garcia-del Portillo F."/>
            <person name="Garrido P."/>
            <person name="Gautier L."/>
            <person name="Goebel W."/>
            <person name="Gomez-Lopez N."/>
            <person name="Hain T."/>
            <person name="Hauf J."/>
            <person name="Jackson D."/>
            <person name="Jones L.-M."/>
            <person name="Kaerst U."/>
            <person name="Kreft J."/>
            <person name="Kuhn M."/>
            <person name="Kunst F."/>
            <person name="Kurapkat G."/>
            <person name="Madueno E."/>
            <person name="Maitournam A."/>
            <person name="Mata Vicente J."/>
            <person name="Ng E."/>
            <person name="Nedjari H."/>
            <person name="Nordsiek G."/>
            <person name="Novella S."/>
            <person name="de Pablos B."/>
            <person name="Perez-Diaz J.-C."/>
            <person name="Purcell R."/>
            <person name="Remmel B."/>
            <person name="Rose M."/>
            <person name="Schlueter T."/>
            <person name="Simoes N."/>
            <person name="Tierrez A."/>
            <person name="Vazquez-Boland J.-A."/>
            <person name="Voss H."/>
            <person name="Wehland J."/>
            <person name="Cossart P."/>
        </authorList>
    </citation>
    <scope>NUCLEOTIDE SEQUENCE [LARGE SCALE GENOMIC DNA]</scope>
    <source>
        <strain>ATCC BAA-680 / CLIP 11262</strain>
    </source>
</reference>
<feature type="chain" id="PRO_0000172005" description="Blue-light photoreceptor">
    <location>
        <begin position="1"/>
        <end position="253"/>
    </location>
</feature>
<feature type="domain" description="PAS" evidence="2">
    <location>
        <begin position="6"/>
        <end position="79"/>
    </location>
</feature>
<feature type="domain" description="PAC" evidence="3">
    <location>
        <begin position="80"/>
        <end position="133"/>
    </location>
</feature>
<feature type="domain" description="STAS" evidence="4">
    <location>
        <begin position="142"/>
        <end position="253"/>
    </location>
</feature>
<feature type="modified residue" description="S-4a-FMN cysteine" evidence="1">
    <location>
        <position position="56"/>
    </location>
</feature>
<comment type="function">
    <text evidence="1">Exhibits the same spectroscopical features and blue-light induced photochemistry as plants phototropins, with the reversible formation of a blue-shifted photoproduct, assigned to an FMN-cysteine thiol adduct. Positive regulator in the activation of the general stress transcription factor sigma-B (By similarity).</text>
</comment>
<comment type="PTM">
    <text evidence="1">FMN binds covalently to cysteine after exposure to blue light and this bond is spontaneously broken in the dark.</text>
</comment>
<name>PHOT_LISIN</name>
<accession>Q92DM1</accession>
<evidence type="ECO:0000250" key="1"/>
<evidence type="ECO:0000255" key="2">
    <source>
        <dbReference type="PROSITE-ProRule" id="PRU00140"/>
    </source>
</evidence>
<evidence type="ECO:0000255" key="3">
    <source>
        <dbReference type="PROSITE-ProRule" id="PRU00141"/>
    </source>
</evidence>
<evidence type="ECO:0000255" key="4">
    <source>
        <dbReference type="PROSITE-ProRule" id="PRU00198"/>
    </source>
</evidence>
<proteinExistence type="inferred from homology"/>
<gene>
    <name type="ordered locus">lin0792</name>
</gene>
<protein>
    <recommendedName>
        <fullName>Blue-light photoreceptor</fullName>
    </recommendedName>
    <alternativeName>
        <fullName>Phototropin homolog</fullName>
    </alternativeName>
</protein>
<keyword id="KW-0157">Chromophore</keyword>
<keyword id="KW-0285">Flavoprotein</keyword>
<keyword id="KW-0288">FMN</keyword>
<keyword id="KW-0600">Photoreceptor protein</keyword>
<keyword id="KW-0675">Receptor</keyword>
<keyword id="KW-0716">Sensory transduction</keyword>
<keyword id="KW-0804">Transcription</keyword>
<keyword id="KW-0805">Transcription regulation</keyword>
<organism>
    <name type="scientific">Listeria innocua serovar 6a (strain ATCC BAA-680 / CLIP 11262)</name>
    <dbReference type="NCBI Taxonomy" id="272626"/>
    <lineage>
        <taxon>Bacteria</taxon>
        <taxon>Bacillati</taxon>
        <taxon>Bacillota</taxon>
        <taxon>Bacilli</taxon>
        <taxon>Bacillales</taxon>
        <taxon>Listeriaceae</taxon>
        <taxon>Listeria</taxon>
    </lineage>
</organism>
<dbReference type="EMBL" id="AL596166">
    <property type="protein sequence ID" value="CAC96024.1"/>
    <property type="molecule type" value="Genomic_DNA"/>
</dbReference>
<dbReference type="PIR" id="AH1531">
    <property type="entry name" value="AH1531"/>
</dbReference>
<dbReference type="RefSeq" id="WP_003761135.1">
    <property type="nucleotide sequence ID" value="NC_003212.1"/>
</dbReference>
<dbReference type="SMR" id="Q92DM1"/>
<dbReference type="STRING" id="272626.gene:17565119"/>
<dbReference type="GeneID" id="93234239"/>
<dbReference type="KEGG" id="lin:lin0792"/>
<dbReference type="eggNOG" id="COG1366">
    <property type="taxonomic scope" value="Bacteria"/>
</dbReference>
<dbReference type="HOGENOM" id="CLU_080905_0_0_9"/>
<dbReference type="OrthoDB" id="9812260at2"/>
<dbReference type="Proteomes" id="UP000002513">
    <property type="component" value="Chromosome"/>
</dbReference>
<dbReference type="GO" id="GO:0009881">
    <property type="term" value="F:photoreceptor activity"/>
    <property type="evidence" value="ECO:0007669"/>
    <property type="project" value="UniProtKB-KW"/>
</dbReference>
<dbReference type="CDD" id="cd00130">
    <property type="entry name" value="PAS"/>
    <property type="match status" value="1"/>
</dbReference>
<dbReference type="CDD" id="cd07041">
    <property type="entry name" value="STAS_RsbR_RsbS_like"/>
    <property type="match status" value="1"/>
</dbReference>
<dbReference type="Gene3D" id="3.30.450.20">
    <property type="entry name" value="PAS domain"/>
    <property type="match status" value="1"/>
</dbReference>
<dbReference type="Gene3D" id="3.30.750.24">
    <property type="entry name" value="STAS domain"/>
    <property type="match status" value="1"/>
</dbReference>
<dbReference type="InterPro" id="IPR051932">
    <property type="entry name" value="Bact_StressResp_Reg"/>
</dbReference>
<dbReference type="InterPro" id="IPR001610">
    <property type="entry name" value="PAC"/>
</dbReference>
<dbReference type="InterPro" id="IPR000014">
    <property type="entry name" value="PAS"/>
</dbReference>
<dbReference type="InterPro" id="IPR000700">
    <property type="entry name" value="PAS-assoc_C"/>
</dbReference>
<dbReference type="InterPro" id="IPR035965">
    <property type="entry name" value="PAS-like_dom_sf"/>
</dbReference>
<dbReference type="InterPro" id="IPR002645">
    <property type="entry name" value="STAS_dom"/>
</dbReference>
<dbReference type="InterPro" id="IPR036513">
    <property type="entry name" value="STAS_dom_sf"/>
</dbReference>
<dbReference type="NCBIfam" id="TIGR00229">
    <property type="entry name" value="sensory_box"/>
    <property type="match status" value="1"/>
</dbReference>
<dbReference type="PANTHER" id="PTHR33745:SF8">
    <property type="entry name" value="BLUE-LIGHT PHOTORECEPTOR"/>
    <property type="match status" value="1"/>
</dbReference>
<dbReference type="PANTHER" id="PTHR33745">
    <property type="entry name" value="RSBT ANTAGONIST PROTEIN RSBS-RELATED"/>
    <property type="match status" value="1"/>
</dbReference>
<dbReference type="Pfam" id="PF13426">
    <property type="entry name" value="PAS_9"/>
    <property type="match status" value="1"/>
</dbReference>
<dbReference type="Pfam" id="PF01740">
    <property type="entry name" value="STAS"/>
    <property type="match status" value="1"/>
</dbReference>
<dbReference type="SMART" id="SM00086">
    <property type="entry name" value="PAC"/>
    <property type="match status" value="1"/>
</dbReference>
<dbReference type="SUPFAM" id="SSF55785">
    <property type="entry name" value="PYP-like sensor domain (PAS domain)"/>
    <property type="match status" value="1"/>
</dbReference>
<dbReference type="SUPFAM" id="SSF52091">
    <property type="entry name" value="SpoIIaa-like"/>
    <property type="match status" value="1"/>
</dbReference>
<dbReference type="PROSITE" id="PS50113">
    <property type="entry name" value="PAC"/>
    <property type="match status" value="1"/>
</dbReference>
<dbReference type="PROSITE" id="PS50112">
    <property type="entry name" value="PAS"/>
    <property type="match status" value="1"/>
</dbReference>
<dbReference type="PROSITE" id="PS50801">
    <property type="entry name" value="STAS"/>
    <property type="match status" value="1"/>
</dbReference>